<evidence type="ECO:0000255" key="1">
    <source>
        <dbReference type="HAMAP-Rule" id="MF_00054"/>
    </source>
</evidence>
<proteinExistence type="inferred from homology"/>
<accession>Q4FQG5</accession>
<organism>
    <name type="scientific">Psychrobacter arcticus (strain DSM 17307 / VKM B-2377 / 273-4)</name>
    <dbReference type="NCBI Taxonomy" id="259536"/>
    <lineage>
        <taxon>Bacteria</taxon>
        <taxon>Pseudomonadati</taxon>
        <taxon>Pseudomonadota</taxon>
        <taxon>Gammaproteobacteria</taxon>
        <taxon>Moraxellales</taxon>
        <taxon>Moraxellaceae</taxon>
        <taxon>Psychrobacter</taxon>
    </lineage>
</organism>
<dbReference type="EMBL" id="CP000082">
    <property type="protein sequence ID" value="AAZ19743.1"/>
    <property type="molecule type" value="Genomic_DNA"/>
</dbReference>
<dbReference type="RefSeq" id="WP_011281152.1">
    <property type="nucleotide sequence ID" value="NC_007204.1"/>
</dbReference>
<dbReference type="SMR" id="Q4FQG5"/>
<dbReference type="STRING" id="259536.Psyc_1895"/>
<dbReference type="KEGG" id="par:Psyc_1895"/>
<dbReference type="eggNOG" id="COG0480">
    <property type="taxonomic scope" value="Bacteria"/>
</dbReference>
<dbReference type="HOGENOM" id="CLU_002794_4_1_6"/>
<dbReference type="OrthoDB" id="9804431at2"/>
<dbReference type="Proteomes" id="UP000000546">
    <property type="component" value="Chromosome"/>
</dbReference>
<dbReference type="GO" id="GO:0005737">
    <property type="term" value="C:cytoplasm"/>
    <property type="evidence" value="ECO:0007669"/>
    <property type="project" value="UniProtKB-SubCell"/>
</dbReference>
<dbReference type="GO" id="GO:0005525">
    <property type="term" value="F:GTP binding"/>
    <property type="evidence" value="ECO:0007669"/>
    <property type="project" value="UniProtKB-UniRule"/>
</dbReference>
<dbReference type="GO" id="GO:0003924">
    <property type="term" value="F:GTPase activity"/>
    <property type="evidence" value="ECO:0007669"/>
    <property type="project" value="InterPro"/>
</dbReference>
<dbReference type="GO" id="GO:0097216">
    <property type="term" value="F:guanosine tetraphosphate binding"/>
    <property type="evidence" value="ECO:0007669"/>
    <property type="project" value="UniProtKB-ARBA"/>
</dbReference>
<dbReference type="GO" id="GO:0003746">
    <property type="term" value="F:translation elongation factor activity"/>
    <property type="evidence" value="ECO:0007669"/>
    <property type="project" value="UniProtKB-UniRule"/>
</dbReference>
<dbReference type="GO" id="GO:0032790">
    <property type="term" value="P:ribosome disassembly"/>
    <property type="evidence" value="ECO:0007669"/>
    <property type="project" value="TreeGrafter"/>
</dbReference>
<dbReference type="CDD" id="cd01886">
    <property type="entry name" value="EF-G"/>
    <property type="match status" value="1"/>
</dbReference>
<dbReference type="CDD" id="cd16262">
    <property type="entry name" value="EFG_III"/>
    <property type="match status" value="1"/>
</dbReference>
<dbReference type="CDD" id="cd01434">
    <property type="entry name" value="EFG_mtEFG1_IV"/>
    <property type="match status" value="1"/>
</dbReference>
<dbReference type="CDD" id="cd03713">
    <property type="entry name" value="EFG_mtEFG_C"/>
    <property type="match status" value="1"/>
</dbReference>
<dbReference type="CDD" id="cd04088">
    <property type="entry name" value="EFG_mtEFG_II"/>
    <property type="match status" value="1"/>
</dbReference>
<dbReference type="FunFam" id="2.40.30.10:FF:000006">
    <property type="entry name" value="Elongation factor G"/>
    <property type="match status" value="1"/>
</dbReference>
<dbReference type="FunFam" id="3.30.230.10:FF:000003">
    <property type="entry name" value="Elongation factor G"/>
    <property type="match status" value="1"/>
</dbReference>
<dbReference type="FunFam" id="3.30.70.240:FF:000001">
    <property type="entry name" value="Elongation factor G"/>
    <property type="match status" value="1"/>
</dbReference>
<dbReference type="FunFam" id="3.30.70.870:FF:000001">
    <property type="entry name" value="Elongation factor G"/>
    <property type="match status" value="1"/>
</dbReference>
<dbReference type="FunFam" id="3.40.50.300:FF:000029">
    <property type="entry name" value="Elongation factor G"/>
    <property type="match status" value="1"/>
</dbReference>
<dbReference type="Gene3D" id="3.30.230.10">
    <property type="match status" value="1"/>
</dbReference>
<dbReference type="Gene3D" id="3.30.70.240">
    <property type="match status" value="1"/>
</dbReference>
<dbReference type="Gene3D" id="3.30.70.870">
    <property type="entry name" value="Elongation Factor G (Translational Gtpase), domain 3"/>
    <property type="match status" value="1"/>
</dbReference>
<dbReference type="Gene3D" id="3.40.50.300">
    <property type="entry name" value="P-loop containing nucleotide triphosphate hydrolases"/>
    <property type="match status" value="1"/>
</dbReference>
<dbReference type="Gene3D" id="2.40.30.10">
    <property type="entry name" value="Translation factors"/>
    <property type="match status" value="1"/>
</dbReference>
<dbReference type="HAMAP" id="MF_00054_B">
    <property type="entry name" value="EF_G_EF_2_B"/>
    <property type="match status" value="1"/>
</dbReference>
<dbReference type="InterPro" id="IPR053905">
    <property type="entry name" value="EF-G-like_DII"/>
</dbReference>
<dbReference type="InterPro" id="IPR041095">
    <property type="entry name" value="EFG_II"/>
</dbReference>
<dbReference type="InterPro" id="IPR009022">
    <property type="entry name" value="EFG_III"/>
</dbReference>
<dbReference type="InterPro" id="IPR035647">
    <property type="entry name" value="EFG_III/V"/>
</dbReference>
<dbReference type="InterPro" id="IPR047872">
    <property type="entry name" value="EFG_IV"/>
</dbReference>
<dbReference type="InterPro" id="IPR035649">
    <property type="entry name" value="EFG_V"/>
</dbReference>
<dbReference type="InterPro" id="IPR000640">
    <property type="entry name" value="EFG_V-like"/>
</dbReference>
<dbReference type="InterPro" id="IPR031157">
    <property type="entry name" value="G_TR_CS"/>
</dbReference>
<dbReference type="InterPro" id="IPR027417">
    <property type="entry name" value="P-loop_NTPase"/>
</dbReference>
<dbReference type="InterPro" id="IPR020568">
    <property type="entry name" value="Ribosomal_Su5_D2-typ_SF"/>
</dbReference>
<dbReference type="InterPro" id="IPR014721">
    <property type="entry name" value="Ribsml_uS5_D2-typ_fold_subgr"/>
</dbReference>
<dbReference type="InterPro" id="IPR005225">
    <property type="entry name" value="Small_GTP-bd"/>
</dbReference>
<dbReference type="InterPro" id="IPR000795">
    <property type="entry name" value="T_Tr_GTP-bd_dom"/>
</dbReference>
<dbReference type="InterPro" id="IPR009000">
    <property type="entry name" value="Transl_B-barrel_sf"/>
</dbReference>
<dbReference type="InterPro" id="IPR004540">
    <property type="entry name" value="Transl_elong_EFG/EF2"/>
</dbReference>
<dbReference type="InterPro" id="IPR005517">
    <property type="entry name" value="Transl_elong_EFG/EF2_IV"/>
</dbReference>
<dbReference type="NCBIfam" id="TIGR00484">
    <property type="entry name" value="EF-G"/>
    <property type="match status" value="1"/>
</dbReference>
<dbReference type="NCBIfam" id="NF009381">
    <property type="entry name" value="PRK12740.1-5"/>
    <property type="match status" value="1"/>
</dbReference>
<dbReference type="NCBIfam" id="TIGR00231">
    <property type="entry name" value="small_GTP"/>
    <property type="match status" value="1"/>
</dbReference>
<dbReference type="PANTHER" id="PTHR43261:SF1">
    <property type="entry name" value="RIBOSOME-RELEASING FACTOR 2, MITOCHONDRIAL"/>
    <property type="match status" value="1"/>
</dbReference>
<dbReference type="PANTHER" id="PTHR43261">
    <property type="entry name" value="TRANSLATION ELONGATION FACTOR G-RELATED"/>
    <property type="match status" value="1"/>
</dbReference>
<dbReference type="Pfam" id="PF22042">
    <property type="entry name" value="EF-G_D2"/>
    <property type="match status" value="1"/>
</dbReference>
<dbReference type="Pfam" id="PF00679">
    <property type="entry name" value="EFG_C"/>
    <property type="match status" value="1"/>
</dbReference>
<dbReference type="Pfam" id="PF14492">
    <property type="entry name" value="EFG_III"/>
    <property type="match status" value="1"/>
</dbReference>
<dbReference type="Pfam" id="PF03764">
    <property type="entry name" value="EFG_IV"/>
    <property type="match status" value="1"/>
</dbReference>
<dbReference type="Pfam" id="PF00009">
    <property type="entry name" value="GTP_EFTU"/>
    <property type="match status" value="1"/>
</dbReference>
<dbReference type="PRINTS" id="PR00315">
    <property type="entry name" value="ELONGATNFCT"/>
</dbReference>
<dbReference type="SMART" id="SM00838">
    <property type="entry name" value="EFG_C"/>
    <property type="match status" value="1"/>
</dbReference>
<dbReference type="SMART" id="SM00889">
    <property type="entry name" value="EFG_IV"/>
    <property type="match status" value="1"/>
</dbReference>
<dbReference type="SUPFAM" id="SSF54980">
    <property type="entry name" value="EF-G C-terminal domain-like"/>
    <property type="match status" value="2"/>
</dbReference>
<dbReference type="SUPFAM" id="SSF52540">
    <property type="entry name" value="P-loop containing nucleoside triphosphate hydrolases"/>
    <property type="match status" value="1"/>
</dbReference>
<dbReference type="SUPFAM" id="SSF54211">
    <property type="entry name" value="Ribosomal protein S5 domain 2-like"/>
    <property type="match status" value="1"/>
</dbReference>
<dbReference type="SUPFAM" id="SSF50447">
    <property type="entry name" value="Translation proteins"/>
    <property type="match status" value="1"/>
</dbReference>
<dbReference type="PROSITE" id="PS00301">
    <property type="entry name" value="G_TR_1"/>
    <property type="match status" value="1"/>
</dbReference>
<dbReference type="PROSITE" id="PS51722">
    <property type="entry name" value="G_TR_2"/>
    <property type="match status" value="1"/>
</dbReference>
<comment type="function">
    <text evidence="1">Catalyzes the GTP-dependent ribosomal translocation step during translation elongation. During this step, the ribosome changes from the pre-translocational (PRE) to the post-translocational (POST) state as the newly formed A-site-bound peptidyl-tRNA and P-site-bound deacylated tRNA move to the P and E sites, respectively. Catalyzes the coordinated movement of the two tRNA molecules, the mRNA and conformational changes in the ribosome.</text>
</comment>
<comment type="subcellular location">
    <subcellularLocation>
        <location evidence="1">Cytoplasm</location>
    </subcellularLocation>
</comment>
<comment type="similarity">
    <text evidence="1">Belongs to the TRAFAC class translation factor GTPase superfamily. Classic translation factor GTPase family. EF-G/EF-2 subfamily.</text>
</comment>
<name>EFG_PSYA2</name>
<sequence>MARKTPLKRYRNIGISAHIDAGKTTTTERVLFYTGVSHKIGEVHDGAATMDWMEQEQERGITITSAATTCFWSGMAKQFDEHRINIIDTPGHVDFTIEVERSMRVLDGACMVYCAVGGVQPQSETVWRQANKYKVPRLAFINKMDRVGADFYRVVEQIKTRLGGKPVPLVIPIGKEDDFEGVVDLITMKAIYWDEASQGMEYDEREIPAELQEKAEEYREYLVENAAEATEELMNEYLENGELTVDQINSAIRQLTINNEIIPLLCGTAFKNKGVQKMLDAVIQYLPAPMDVPAIKGILDDKDESEGTREASDEAPFSALAFKIMNDKFVGNLTFVRVYSGVLTQGSSVYNPVKMKRERVGRIVQMMANSQEELQEIRTGDIAALVGMKDVTTGDTLCDEQNVITLERMEFPDPVISLAVEPKTKADQEKMSIALGRLAKEDPSFRVHTDEESGQTIISGMGELHLEILVDRMKREFGVEANIGAPQVAYRETIRNTVEQEGKFVRQTGGRGKFGHVWLRLEPMDPAGDVLYEFKEEVVGGTVPKEFHGAVDKGIQERMKNGVLAGYPIVGVKATLYDGSYHDVDSDELSFKMAGSIAFRKGFMAANPTLLEPVMKVEVETPEDYMGDIMGDLSRRRGMVQGMEDLPGGTKQIRAEVPLAEMFGYATQMRSMSQGRATYSMEFQKYAEIPKSVAEAIISKFNNKDDDE</sequence>
<feature type="chain" id="PRO_0000225233" description="Elongation factor G">
    <location>
        <begin position="1"/>
        <end position="708"/>
    </location>
</feature>
<feature type="domain" description="tr-type G">
    <location>
        <begin position="8"/>
        <end position="290"/>
    </location>
</feature>
<feature type="binding site" evidence="1">
    <location>
        <begin position="17"/>
        <end position="24"/>
    </location>
    <ligand>
        <name>GTP</name>
        <dbReference type="ChEBI" id="CHEBI:37565"/>
    </ligand>
</feature>
<feature type="binding site" evidence="1">
    <location>
        <begin position="88"/>
        <end position="92"/>
    </location>
    <ligand>
        <name>GTP</name>
        <dbReference type="ChEBI" id="CHEBI:37565"/>
    </ligand>
</feature>
<feature type="binding site" evidence="1">
    <location>
        <begin position="142"/>
        <end position="145"/>
    </location>
    <ligand>
        <name>GTP</name>
        <dbReference type="ChEBI" id="CHEBI:37565"/>
    </ligand>
</feature>
<protein>
    <recommendedName>
        <fullName evidence="1">Elongation factor G</fullName>
        <shortName evidence="1">EF-G</shortName>
    </recommendedName>
</protein>
<reference key="1">
    <citation type="journal article" date="2010" name="Appl. Environ. Microbiol.">
        <title>The genome sequence of Psychrobacter arcticus 273-4, a psychroactive Siberian permafrost bacterium, reveals mechanisms for adaptation to low-temperature growth.</title>
        <authorList>
            <person name="Ayala-del-Rio H.L."/>
            <person name="Chain P.S."/>
            <person name="Grzymski J.J."/>
            <person name="Ponder M.A."/>
            <person name="Ivanova N."/>
            <person name="Bergholz P.W."/>
            <person name="Di Bartolo G."/>
            <person name="Hauser L."/>
            <person name="Land M."/>
            <person name="Bakermans C."/>
            <person name="Rodrigues D."/>
            <person name="Klappenbach J."/>
            <person name="Zarka D."/>
            <person name="Larimer F."/>
            <person name="Richardson P."/>
            <person name="Murray A."/>
            <person name="Thomashow M."/>
            <person name="Tiedje J.M."/>
        </authorList>
    </citation>
    <scope>NUCLEOTIDE SEQUENCE [LARGE SCALE GENOMIC DNA]</scope>
    <source>
        <strain>DSM 17307 / VKM B-2377 / 273-4</strain>
    </source>
</reference>
<gene>
    <name evidence="1" type="primary">fusA</name>
    <name type="ordered locus">Psyc_1895</name>
</gene>
<keyword id="KW-0963">Cytoplasm</keyword>
<keyword id="KW-0251">Elongation factor</keyword>
<keyword id="KW-0342">GTP-binding</keyword>
<keyword id="KW-0547">Nucleotide-binding</keyword>
<keyword id="KW-0648">Protein biosynthesis</keyword>
<keyword id="KW-1185">Reference proteome</keyword>